<gene>
    <name evidence="1" type="primary">prs</name>
    <name type="synonym">prsA</name>
    <name type="ordered locus">YPO2013</name>
    <name type="ordered locus">y2295</name>
    <name type="ordered locus">YP_1861</name>
</gene>
<name>KPRS_YERPE</name>
<evidence type="ECO:0000255" key="1">
    <source>
        <dbReference type="HAMAP-Rule" id="MF_00583"/>
    </source>
</evidence>
<evidence type="ECO:0000305" key="2"/>
<organism>
    <name type="scientific">Yersinia pestis</name>
    <dbReference type="NCBI Taxonomy" id="632"/>
    <lineage>
        <taxon>Bacteria</taxon>
        <taxon>Pseudomonadati</taxon>
        <taxon>Pseudomonadota</taxon>
        <taxon>Gammaproteobacteria</taxon>
        <taxon>Enterobacterales</taxon>
        <taxon>Yersiniaceae</taxon>
        <taxon>Yersinia</taxon>
    </lineage>
</organism>
<accession>Q8ZEY2</accession>
<accession>Q0WFD9</accession>
<feature type="chain" id="PRO_0000141231" description="Ribose-phosphate pyrophosphokinase">
    <location>
        <begin position="1"/>
        <end position="315"/>
    </location>
</feature>
<feature type="active site" evidence="1">
    <location>
        <position position="194"/>
    </location>
</feature>
<feature type="binding site" evidence="1">
    <location>
        <begin position="37"/>
        <end position="39"/>
    </location>
    <ligand>
        <name>ATP</name>
        <dbReference type="ChEBI" id="CHEBI:30616"/>
    </ligand>
</feature>
<feature type="binding site" evidence="1">
    <location>
        <begin position="96"/>
        <end position="97"/>
    </location>
    <ligand>
        <name>ATP</name>
        <dbReference type="ChEBI" id="CHEBI:30616"/>
    </ligand>
</feature>
<feature type="binding site" evidence="1">
    <location>
        <position position="131"/>
    </location>
    <ligand>
        <name>Mg(2+)</name>
        <dbReference type="ChEBI" id="CHEBI:18420"/>
        <label>1</label>
    </ligand>
</feature>
<feature type="binding site" evidence="1">
    <location>
        <position position="170"/>
    </location>
    <ligand>
        <name>Mg(2+)</name>
        <dbReference type="ChEBI" id="CHEBI:18420"/>
        <label>2</label>
    </ligand>
</feature>
<feature type="binding site" evidence="1">
    <location>
        <position position="196"/>
    </location>
    <ligand>
        <name>D-ribose 5-phosphate</name>
        <dbReference type="ChEBI" id="CHEBI:78346"/>
    </ligand>
</feature>
<feature type="binding site" evidence="1">
    <location>
        <position position="220"/>
    </location>
    <ligand>
        <name>D-ribose 5-phosphate</name>
        <dbReference type="ChEBI" id="CHEBI:78346"/>
    </ligand>
</feature>
<feature type="binding site" evidence="1">
    <location>
        <begin position="224"/>
        <end position="228"/>
    </location>
    <ligand>
        <name>D-ribose 5-phosphate</name>
        <dbReference type="ChEBI" id="CHEBI:78346"/>
    </ligand>
</feature>
<dbReference type="EC" id="2.7.6.1" evidence="1"/>
<dbReference type="EMBL" id="AL590842">
    <property type="protein sequence ID" value="CAL20650.1"/>
    <property type="molecule type" value="Genomic_DNA"/>
</dbReference>
<dbReference type="EMBL" id="AE009952">
    <property type="protein sequence ID" value="AAM85854.1"/>
    <property type="status" value="ALT_INIT"/>
    <property type="molecule type" value="Genomic_DNA"/>
</dbReference>
<dbReference type="EMBL" id="AE017042">
    <property type="protein sequence ID" value="AAS62081.1"/>
    <property type="status" value="ALT_INIT"/>
    <property type="molecule type" value="Genomic_DNA"/>
</dbReference>
<dbReference type="PIR" id="AG0245">
    <property type="entry name" value="AG0245"/>
</dbReference>
<dbReference type="RefSeq" id="WP_002211240.1">
    <property type="nucleotide sequence ID" value="NZ_WUCM01000039.1"/>
</dbReference>
<dbReference type="RefSeq" id="YP_002346999.1">
    <property type="nucleotide sequence ID" value="NC_003143.1"/>
</dbReference>
<dbReference type="SMR" id="Q8ZEY2"/>
<dbReference type="STRING" id="214092.YPO2013"/>
<dbReference type="PaxDb" id="214092-YPO2013"/>
<dbReference type="DNASU" id="1147242"/>
<dbReference type="EnsemblBacteria" id="AAS62081">
    <property type="protein sequence ID" value="AAS62081"/>
    <property type="gene ID" value="YP_1861"/>
</dbReference>
<dbReference type="GeneID" id="96665496"/>
<dbReference type="KEGG" id="ype:YPO2013"/>
<dbReference type="KEGG" id="ypk:y2295"/>
<dbReference type="KEGG" id="ypm:YP_1861"/>
<dbReference type="PATRIC" id="fig|214092.21.peg.2398"/>
<dbReference type="eggNOG" id="COG0462">
    <property type="taxonomic scope" value="Bacteria"/>
</dbReference>
<dbReference type="HOGENOM" id="CLU_033546_2_0_6"/>
<dbReference type="OMA" id="YFGWARQ"/>
<dbReference type="OrthoDB" id="9777067at2"/>
<dbReference type="UniPathway" id="UPA00087">
    <property type="reaction ID" value="UER00172"/>
</dbReference>
<dbReference type="Proteomes" id="UP000000815">
    <property type="component" value="Chromosome"/>
</dbReference>
<dbReference type="Proteomes" id="UP000001019">
    <property type="component" value="Chromosome"/>
</dbReference>
<dbReference type="Proteomes" id="UP000002490">
    <property type="component" value="Chromosome"/>
</dbReference>
<dbReference type="GO" id="GO:0005737">
    <property type="term" value="C:cytoplasm"/>
    <property type="evidence" value="ECO:0000318"/>
    <property type="project" value="GO_Central"/>
</dbReference>
<dbReference type="GO" id="GO:0002189">
    <property type="term" value="C:ribose phosphate diphosphokinase complex"/>
    <property type="evidence" value="ECO:0000318"/>
    <property type="project" value="GO_Central"/>
</dbReference>
<dbReference type="GO" id="GO:0005524">
    <property type="term" value="F:ATP binding"/>
    <property type="evidence" value="ECO:0007669"/>
    <property type="project" value="UniProtKB-KW"/>
</dbReference>
<dbReference type="GO" id="GO:0016301">
    <property type="term" value="F:kinase activity"/>
    <property type="evidence" value="ECO:0007669"/>
    <property type="project" value="UniProtKB-KW"/>
</dbReference>
<dbReference type="GO" id="GO:0000287">
    <property type="term" value="F:magnesium ion binding"/>
    <property type="evidence" value="ECO:0007669"/>
    <property type="project" value="UniProtKB-UniRule"/>
</dbReference>
<dbReference type="GO" id="GO:0004749">
    <property type="term" value="F:ribose phosphate diphosphokinase activity"/>
    <property type="evidence" value="ECO:0000318"/>
    <property type="project" value="GO_Central"/>
</dbReference>
<dbReference type="GO" id="GO:0006015">
    <property type="term" value="P:5-phosphoribose 1-diphosphate biosynthetic process"/>
    <property type="evidence" value="ECO:0000318"/>
    <property type="project" value="GO_Central"/>
</dbReference>
<dbReference type="GO" id="GO:0006164">
    <property type="term" value="P:purine nucleotide biosynthetic process"/>
    <property type="evidence" value="ECO:0000318"/>
    <property type="project" value="GO_Central"/>
</dbReference>
<dbReference type="GO" id="GO:0009156">
    <property type="term" value="P:ribonucleoside monophosphate biosynthetic process"/>
    <property type="evidence" value="ECO:0007669"/>
    <property type="project" value="InterPro"/>
</dbReference>
<dbReference type="CDD" id="cd06223">
    <property type="entry name" value="PRTases_typeI"/>
    <property type="match status" value="1"/>
</dbReference>
<dbReference type="FunFam" id="3.40.50.2020:FF:000001">
    <property type="entry name" value="Ribose-phosphate pyrophosphokinase"/>
    <property type="match status" value="1"/>
</dbReference>
<dbReference type="Gene3D" id="3.40.50.2020">
    <property type="match status" value="2"/>
</dbReference>
<dbReference type="HAMAP" id="MF_00583_B">
    <property type="entry name" value="RibP_PPkinase_B"/>
    <property type="match status" value="1"/>
</dbReference>
<dbReference type="InterPro" id="IPR000842">
    <property type="entry name" value="PRib_PP_synth_CS"/>
</dbReference>
<dbReference type="InterPro" id="IPR029099">
    <property type="entry name" value="Pribosyltran_N"/>
</dbReference>
<dbReference type="InterPro" id="IPR000836">
    <property type="entry name" value="PRibTrfase_dom"/>
</dbReference>
<dbReference type="InterPro" id="IPR029057">
    <property type="entry name" value="PRTase-like"/>
</dbReference>
<dbReference type="InterPro" id="IPR005946">
    <property type="entry name" value="Rib-P_diPkinase"/>
</dbReference>
<dbReference type="InterPro" id="IPR037515">
    <property type="entry name" value="Rib-P_diPkinase_bac"/>
</dbReference>
<dbReference type="NCBIfam" id="NF002320">
    <property type="entry name" value="PRK01259.1"/>
    <property type="match status" value="1"/>
</dbReference>
<dbReference type="NCBIfam" id="TIGR01251">
    <property type="entry name" value="ribP_PPkin"/>
    <property type="match status" value="1"/>
</dbReference>
<dbReference type="PANTHER" id="PTHR10210">
    <property type="entry name" value="RIBOSE-PHOSPHATE DIPHOSPHOKINASE FAMILY MEMBER"/>
    <property type="match status" value="1"/>
</dbReference>
<dbReference type="PANTHER" id="PTHR10210:SF41">
    <property type="entry name" value="RIBOSE-PHOSPHATE PYROPHOSPHOKINASE 1, CHLOROPLASTIC"/>
    <property type="match status" value="1"/>
</dbReference>
<dbReference type="Pfam" id="PF14572">
    <property type="entry name" value="Pribosyl_synth"/>
    <property type="match status" value="1"/>
</dbReference>
<dbReference type="Pfam" id="PF13793">
    <property type="entry name" value="Pribosyltran_N"/>
    <property type="match status" value="1"/>
</dbReference>
<dbReference type="SMART" id="SM01400">
    <property type="entry name" value="Pribosyltran_N"/>
    <property type="match status" value="1"/>
</dbReference>
<dbReference type="SUPFAM" id="SSF53271">
    <property type="entry name" value="PRTase-like"/>
    <property type="match status" value="1"/>
</dbReference>
<dbReference type="PROSITE" id="PS00114">
    <property type="entry name" value="PRPP_SYNTHASE"/>
    <property type="match status" value="1"/>
</dbReference>
<proteinExistence type="inferred from homology"/>
<reference key="1">
    <citation type="journal article" date="2001" name="Nature">
        <title>Genome sequence of Yersinia pestis, the causative agent of plague.</title>
        <authorList>
            <person name="Parkhill J."/>
            <person name="Wren B.W."/>
            <person name="Thomson N.R."/>
            <person name="Titball R.W."/>
            <person name="Holden M.T.G."/>
            <person name="Prentice M.B."/>
            <person name="Sebaihia M."/>
            <person name="James K.D."/>
            <person name="Churcher C.M."/>
            <person name="Mungall K.L."/>
            <person name="Baker S."/>
            <person name="Basham D."/>
            <person name="Bentley S.D."/>
            <person name="Brooks K."/>
            <person name="Cerdeno-Tarraga A.-M."/>
            <person name="Chillingworth T."/>
            <person name="Cronin A."/>
            <person name="Davies R.M."/>
            <person name="Davis P."/>
            <person name="Dougan G."/>
            <person name="Feltwell T."/>
            <person name="Hamlin N."/>
            <person name="Holroyd S."/>
            <person name="Jagels K."/>
            <person name="Karlyshev A.V."/>
            <person name="Leather S."/>
            <person name="Moule S."/>
            <person name="Oyston P.C.F."/>
            <person name="Quail M.A."/>
            <person name="Rutherford K.M."/>
            <person name="Simmonds M."/>
            <person name="Skelton J."/>
            <person name="Stevens K."/>
            <person name="Whitehead S."/>
            <person name="Barrell B.G."/>
        </authorList>
    </citation>
    <scope>NUCLEOTIDE SEQUENCE [LARGE SCALE GENOMIC DNA]</scope>
    <source>
        <strain>CO-92 / Biovar Orientalis</strain>
    </source>
</reference>
<reference key="2">
    <citation type="journal article" date="2002" name="J. Bacteriol.">
        <title>Genome sequence of Yersinia pestis KIM.</title>
        <authorList>
            <person name="Deng W."/>
            <person name="Burland V."/>
            <person name="Plunkett G. III"/>
            <person name="Boutin A."/>
            <person name="Mayhew G.F."/>
            <person name="Liss P."/>
            <person name="Perna N.T."/>
            <person name="Rose D.J."/>
            <person name="Mau B."/>
            <person name="Zhou S."/>
            <person name="Schwartz D.C."/>
            <person name="Fetherston J.D."/>
            <person name="Lindler L.E."/>
            <person name="Brubaker R.R."/>
            <person name="Plano G.V."/>
            <person name="Straley S.C."/>
            <person name="McDonough K.A."/>
            <person name="Nilles M.L."/>
            <person name="Matson J.S."/>
            <person name="Blattner F.R."/>
            <person name="Perry R.D."/>
        </authorList>
    </citation>
    <scope>NUCLEOTIDE SEQUENCE [LARGE SCALE GENOMIC DNA]</scope>
    <source>
        <strain>KIM10+ / Biovar Mediaevalis</strain>
    </source>
</reference>
<reference key="3">
    <citation type="journal article" date="2004" name="DNA Res.">
        <title>Complete genome sequence of Yersinia pestis strain 91001, an isolate avirulent to humans.</title>
        <authorList>
            <person name="Song Y."/>
            <person name="Tong Z."/>
            <person name="Wang J."/>
            <person name="Wang L."/>
            <person name="Guo Z."/>
            <person name="Han Y."/>
            <person name="Zhang J."/>
            <person name="Pei D."/>
            <person name="Zhou D."/>
            <person name="Qin H."/>
            <person name="Pang X."/>
            <person name="Han Y."/>
            <person name="Zhai J."/>
            <person name="Li M."/>
            <person name="Cui B."/>
            <person name="Qi Z."/>
            <person name="Jin L."/>
            <person name="Dai R."/>
            <person name="Chen F."/>
            <person name="Li S."/>
            <person name="Ye C."/>
            <person name="Du Z."/>
            <person name="Lin W."/>
            <person name="Wang J."/>
            <person name="Yu J."/>
            <person name="Yang H."/>
            <person name="Wang J."/>
            <person name="Huang P."/>
            <person name="Yang R."/>
        </authorList>
    </citation>
    <scope>NUCLEOTIDE SEQUENCE [LARGE SCALE GENOMIC DNA]</scope>
    <source>
        <strain>91001 / Biovar Mediaevalis</strain>
    </source>
</reference>
<comment type="function">
    <text evidence="1">Involved in the biosynthesis of the central metabolite phospho-alpha-D-ribosyl-1-pyrophosphate (PRPP) via the transfer of pyrophosphoryl group from ATP to 1-hydroxyl of ribose-5-phosphate (Rib-5-P).</text>
</comment>
<comment type="catalytic activity">
    <reaction evidence="1">
        <text>D-ribose 5-phosphate + ATP = 5-phospho-alpha-D-ribose 1-diphosphate + AMP + H(+)</text>
        <dbReference type="Rhea" id="RHEA:15609"/>
        <dbReference type="ChEBI" id="CHEBI:15378"/>
        <dbReference type="ChEBI" id="CHEBI:30616"/>
        <dbReference type="ChEBI" id="CHEBI:58017"/>
        <dbReference type="ChEBI" id="CHEBI:78346"/>
        <dbReference type="ChEBI" id="CHEBI:456215"/>
        <dbReference type="EC" id="2.7.6.1"/>
    </reaction>
</comment>
<comment type="cofactor">
    <cofactor evidence="1">
        <name>Mg(2+)</name>
        <dbReference type="ChEBI" id="CHEBI:18420"/>
    </cofactor>
    <text evidence="1">Binds 2 Mg(2+) ions per subunit.</text>
</comment>
<comment type="pathway">
    <text evidence="1">Metabolic intermediate biosynthesis; 5-phospho-alpha-D-ribose 1-diphosphate biosynthesis; 5-phospho-alpha-D-ribose 1-diphosphate from D-ribose 5-phosphate (route I): step 1/1.</text>
</comment>
<comment type="subunit">
    <text evidence="1">Homohexamer.</text>
</comment>
<comment type="subcellular location">
    <subcellularLocation>
        <location evidence="1">Cytoplasm</location>
    </subcellularLocation>
</comment>
<comment type="similarity">
    <text evidence="1">Belongs to the ribose-phosphate pyrophosphokinase family. Class I subfamily.</text>
</comment>
<comment type="sequence caution" evidence="2">
    <conflict type="erroneous initiation">
        <sequence resource="EMBL-CDS" id="AAM85854"/>
    </conflict>
    <text>Extended N-terminus.</text>
</comment>
<comment type="sequence caution" evidence="2">
    <conflict type="erroneous initiation">
        <sequence resource="EMBL-CDS" id="AAS62081"/>
    </conflict>
    <text>Extended N-terminus.</text>
</comment>
<sequence>MPDMKLFAGNATPELAQRIANRLYTSLGDAAVGRFSDGEVSVQINENVRGGDIFIIQSTCAPTNDNLMELVVMVDALRRASAGRITAVIPYFGYARQDRRVRSARVPITAKVVADFLSSVGVDRVLTVDLHAEQIQGFFDVPVDNVFGSPILLEDMLQQNLENPIVVSPDIGGVVRARAIAKLLNDTDMAIIDKRRPRANVSQVMHIIGDVAGRDCVLVDDMIDTGGTLCKAAEALKERGAKRVFAYATHPIFSGNAVDNIRNSVIDEVIVCDTIPLSAEIKALKNVRTLTLSGMLAEAIRRISNEESISAMFEH</sequence>
<protein>
    <recommendedName>
        <fullName evidence="1">Ribose-phosphate pyrophosphokinase</fullName>
        <shortName evidence="1">RPPK</shortName>
        <ecNumber evidence="1">2.7.6.1</ecNumber>
    </recommendedName>
    <alternativeName>
        <fullName evidence="1">5-phospho-D-ribosyl alpha-1-diphosphate synthase</fullName>
    </alternativeName>
    <alternativeName>
        <fullName evidence="1">Phosphoribosyl diphosphate synthase</fullName>
    </alternativeName>
    <alternativeName>
        <fullName evidence="1">Phosphoribosyl pyrophosphate synthase</fullName>
        <shortName evidence="1">P-Rib-PP synthase</shortName>
        <shortName evidence="1">PRPP synthase</shortName>
        <shortName evidence="1">PRPPase</shortName>
    </alternativeName>
</protein>
<keyword id="KW-0067">ATP-binding</keyword>
<keyword id="KW-0963">Cytoplasm</keyword>
<keyword id="KW-0418">Kinase</keyword>
<keyword id="KW-0460">Magnesium</keyword>
<keyword id="KW-0479">Metal-binding</keyword>
<keyword id="KW-0545">Nucleotide biosynthesis</keyword>
<keyword id="KW-0547">Nucleotide-binding</keyword>
<keyword id="KW-1185">Reference proteome</keyword>
<keyword id="KW-0808">Transferase</keyword>